<reference key="1">
    <citation type="journal article" date="1997" name="J. Virol.">
        <title>Primary structure of the alcelaphine herpesvirus 1 genome.</title>
        <authorList>
            <person name="Ensser A."/>
            <person name="Pflanz R."/>
            <person name="Fleckenstein B."/>
        </authorList>
    </citation>
    <scope>NUCLEOTIDE SEQUENCE [LARGE SCALE GENOMIC DNA]</scope>
</reference>
<protein>
    <recommendedName>
        <fullName>Uncharacterized gene 45 protein</fullName>
    </recommendedName>
</protein>
<dbReference type="EMBL" id="AF005370">
    <property type="protein sequence ID" value="AAC58091.1"/>
    <property type="molecule type" value="Genomic_DNA"/>
</dbReference>
<dbReference type="PIR" id="T03139">
    <property type="entry name" value="T03139"/>
</dbReference>
<dbReference type="RefSeq" id="NP_065543.1">
    <property type="nucleotide sequence ID" value="NC_002531.1"/>
</dbReference>
<dbReference type="SMR" id="O36394"/>
<dbReference type="KEGG" id="vg:911764"/>
<dbReference type="Proteomes" id="UP000000941">
    <property type="component" value="Segment"/>
</dbReference>
<name>VG45_ALHV1</name>
<sequence length="235" mass="25388">MAMFFKKNDDRMFPIEGAPRRKRTNFFTFPSLQKLHQNAKLNDGDNDEVFSPEPSSGESIDLDISPLTPPDGSDDYSDVEDGGAEEGDSDPPIKPVRAARLGERCCAGLKRTSSTSTASTSSGSNDGGDCNYYAPPAKKPAPIHGNPLGGKRRPELDLSPKIENRSDSSSRESTTSSDSWDYVNNKDNPSRGQGNENPSASDSLGALQAACIHQDHAMPTTPPVKGGEDYPWPWN</sequence>
<organism>
    <name type="scientific">Alcelaphine herpesvirus 1 (strain C500)</name>
    <name type="common">AlHV-1</name>
    <name type="synonym">Malignant catarrhal fever virus</name>
    <dbReference type="NCBI Taxonomy" id="654901"/>
    <lineage>
        <taxon>Viruses</taxon>
        <taxon>Duplodnaviria</taxon>
        <taxon>Heunggongvirae</taxon>
        <taxon>Peploviricota</taxon>
        <taxon>Herviviricetes</taxon>
        <taxon>Herpesvirales</taxon>
        <taxon>Orthoherpesviridae</taxon>
        <taxon>Gammaherpesvirinae</taxon>
        <taxon>Macavirus</taxon>
        <taxon>Macavirus alcelaphinegamma1</taxon>
    </lineage>
</organism>
<comment type="similarity">
    <text evidence="2">Belongs to the herpesviridae BKRF4 family.</text>
</comment>
<proteinExistence type="inferred from homology"/>
<gene>
    <name type="primary">45</name>
</gene>
<organismHost>
    <name type="scientific">Connochaetes taurinus</name>
    <name type="common">Blue wildebeest</name>
    <dbReference type="NCBI Taxonomy" id="9927"/>
</organismHost>
<feature type="chain" id="PRO_0000405734" description="Uncharacterized gene 45 protein">
    <location>
        <begin position="1"/>
        <end position="235"/>
    </location>
</feature>
<feature type="region of interest" description="Disordered" evidence="1">
    <location>
        <begin position="37"/>
        <end position="235"/>
    </location>
</feature>
<feature type="compositionally biased region" description="Acidic residues" evidence="1">
    <location>
        <begin position="72"/>
        <end position="89"/>
    </location>
</feature>
<feature type="compositionally biased region" description="Low complexity" evidence="1">
    <location>
        <begin position="112"/>
        <end position="124"/>
    </location>
</feature>
<feature type="compositionally biased region" description="Basic and acidic residues" evidence="1">
    <location>
        <begin position="152"/>
        <end position="170"/>
    </location>
</feature>
<feature type="compositionally biased region" description="Polar residues" evidence="1">
    <location>
        <begin position="185"/>
        <end position="202"/>
    </location>
</feature>
<keyword id="KW-1185">Reference proteome</keyword>
<accession>O36394</accession>
<evidence type="ECO:0000256" key="1">
    <source>
        <dbReference type="SAM" id="MobiDB-lite"/>
    </source>
</evidence>
<evidence type="ECO:0000305" key="2"/>